<comment type="function">
    <text>Inhibits Na(+),K(+) ATPase by the competitive mode against Na(+).</text>
</comment>
<comment type="tissue specificity">
    <text>Small intestine &gt; large intestine. The plasma contains the pro-SPAI form circulating.</text>
</comment>
<comment type="domain">
    <text>The repetitive domain of pro-SPAI serves as a substrate for transglutaminase.</text>
</comment>
<comment type="PTM">
    <text>The short form (AA 127-187) may be an artifact due to the strongly acidic conditions of the duodenum. The pro-SPAI form may be the native form.</text>
</comment>
<sequence>MRSRSFLVLVAVFLICETLVAQRLDRIRGPKGQGQDPVEGQDQDEGPGPVKVEILDIGQDPVKGQDPVKGQDPVKGQDPVKGQDLVKSQDPVKAELPDIGQDVVKGHEPVEGQDPVNAQLPDKVQDPVKAQPAVPGRFLLSKRGHCPRILFRCPLSNPSNKCWRDYDCPGVKKCCEGFCGKDCLYPK</sequence>
<reference key="1">
    <citation type="journal article" date="1995" name="J. Biol. Chem.">
        <title>Cloning, characterization, and tissue distribution of porcine SPAI, a protein with a transglutaminase substrate domain and the WAP motif.</title>
        <authorList>
            <person name="Kuroki J."/>
            <person name="Hosoya T."/>
            <person name="Itakura M."/>
            <person name="Hirose S."/>
            <person name="Tamechika I."/>
            <person name="Yoshimoto T."/>
            <person name="Ghoneim M.A."/>
            <person name="Nara K."/>
            <person name="Kato A."/>
            <person name="Suzuki Y."/>
            <person name="Furukawa M."/>
            <person name="Tachibana S."/>
        </authorList>
    </citation>
    <scope>NUCLEOTIDE SEQUENCE [GENOMIC DNA / MRNA]</scope>
    <scope>PROTEIN SEQUENCE OF 22-58</scope>
    <scope>PYROGLUTAMATE FORMATION AT GLN-22</scope>
    <source>
        <tissue>Duodenum</tissue>
    </source>
</reference>
<reference key="2">
    <citation type="journal article" date="1996" name="J. Biol. Chem.">
        <title>Accelerated evolution in inhibitor domains of porcine elafin family members.</title>
        <authorList>
            <person name="Tamechika I."/>
            <person name="Itakura M."/>
            <person name="Saruta Y."/>
            <person name="Furukawa M."/>
            <person name="Kato A."/>
            <person name="Tachibana S."/>
            <person name="Hirose S."/>
        </authorList>
    </citation>
    <scope>NUCLEOTIDE SEQUENCE [GENOMIC DNA]</scope>
</reference>
<reference key="3">
    <citation type="journal article" date="1989" name="Biochem. Biophys. Res. Commun.">
        <title>Novel peptide inhibitor (SPAI) of Na+, K+-ATPase from porcine intestine.</title>
        <authorList>
            <person name="Araki K."/>
            <person name="Kuroki J."/>
            <person name="Ito O."/>
            <person name="Kuwada M."/>
            <person name="Tachibana S."/>
        </authorList>
    </citation>
    <scope>PROTEIN SEQUENCE OF 127-187</scope>
    <source>
        <tissue>Duodenum</tissue>
    </source>
</reference>
<reference key="4">
    <citation type="journal article" date="1990" name="Biochem. Biophys. Res. Commun.">
        <title>Four disulfide bonds' allocation of Na+, K(+)-ATPase inhibitor (SPAI).</title>
        <authorList>
            <person name="Araki K."/>
            <person name="Kuwada M."/>
            <person name="Ito O."/>
            <person name="Kuroki J."/>
            <person name="Tachibana S."/>
        </authorList>
    </citation>
    <scope>DISULFIDE BONDS</scope>
</reference>
<evidence type="ECO:0000255" key="1">
    <source>
        <dbReference type="PROSITE-ProRule" id="PRU00722"/>
    </source>
</evidence>
<evidence type="ECO:0000256" key="2">
    <source>
        <dbReference type="SAM" id="MobiDB-lite"/>
    </source>
</evidence>
<evidence type="ECO:0000269" key="3">
    <source>
    </source>
</evidence>
<evidence type="ECO:0000269" key="4">
    <source>
    </source>
</evidence>
<evidence type="ECO:0000269" key="5">
    <source>
    </source>
</evidence>
<feature type="signal peptide" evidence="5">
    <location>
        <begin position="1"/>
        <end position="21"/>
    </location>
</feature>
<feature type="propeptide" id="PRO_0000041361" evidence="4">
    <location>
        <begin position="22"/>
        <end position="126"/>
    </location>
</feature>
<feature type="chain" id="PRO_0000041362" description="Sodium/potassium ATPase inhibitor SPAI-2">
    <location>
        <begin position="127"/>
        <end position="187"/>
    </location>
</feature>
<feature type="repeat" description="1">
    <location>
        <begin position="34"/>
        <end position="39"/>
    </location>
</feature>
<feature type="repeat" description="2">
    <location>
        <begin position="40"/>
        <end position="45"/>
    </location>
</feature>
<feature type="repeat" description="3">
    <location>
        <begin position="46"/>
        <end position="51"/>
    </location>
</feature>
<feature type="repeat" description="4">
    <location>
        <begin position="58"/>
        <end position="63"/>
    </location>
</feature>
<feature type="repeat" description="SVP-1 clotting 1">
    <location>
        <begin position="64"/>
        <end position="85"/>
    </location>
</feature>
<feature type="repeat" description="5">
    <location>
        <begin position="64"/>
        <end position="69"/>
    </location>
</feature>
<feature type="repeat" description="6">
    <location>
        <begin position="70"/>
        <end position="75"/>
    </location>
</feature>
<feature type="repeat" description="7">
    <location>
        <begin position="76"/>
        <end position="81"/>
    </location>
</feature>
<feature type="repeat" description="8">
    <location>
        <begin position="82"/>
        <end position="87"/>
    </location>
</feature>
<feature type="repeat" description="9">
    <location>
        <begin position="88"/>
        <end position="93"/>
    </location>
</feature>
<feature type="repeat" description="10">
    <location>
        <begin position="100"/>
        <end position="105"/>
    </location>
</feature>
<feature type="repeat" description="11">
    <location>
        <begin position="106"/>
        <end position="111"/>
    </location>
</feature>
<feature type="repeat" description="12">
    <location>
        <begin position="112"/>
        <end position="117"/>
    </location>
</feature>
<feature type="repeat" description="13">
    <location>
        <begin position="118"/>
        <end position="123"/>
    </location>
</feature>
<feature type="repeat" description="14">
    <location>
        <begin position="124"/>
        <end position="129"/>
    </location>
</feature>
<feature type="domain" description="WAP" evidence="1">
    <location>
        <begin position="139"/>
        <end position="187"/>
    </location>
</feature>
<feature type="region of interest" description="Disordered" evidence="2">
    <location>
        <begin position="28"/>
        <end position="98"/>
    </location>
</feature>
<feature type="region of interest" description="14 X 6 AA approximate tandem repeats">
    <location>
        <begin position="34"/>
        <end position="129"/>
    </location>
</feature>
<feature type="modified residue" description="Pyrrolidone carboxylic acid" evidence="5">
    <location>
        <position position="22"/>
    </location>
</feature>
<feature type="disulfide bond" evidence="1 3">
    <location>
        <begin position="146"/>
        <end position="175"/>
    </location>
</feature>
<feature type="disulfide bond" evidence="1 3">
    <location>
        <begin position="153"/>
        <end position="179"/>
    </location>
</feature>
<feature type="disulfide bond" evidence="1 3">
    <location>
        <begin position="162"/>
        <end position="174"/>
    </location>
</feature>
<feature type="disulfide bond" evidence="1 3">
    <location>
        <begin position="168"/>
        <end position="183"/>
    </location>
</feature>
<feature type="sequence variant" description="In SPAI-1.">
    <location>
        <begin position="127"/>
        <end position="138"/>
    </location>
</feature>
<feature type="sequence variant" description="In SPAI-3.">
    <original>R</original>
    <variation>G</variation>
    <location>
        <position position="148"/>
    </location>
</feature>
<feature type="sequence variant" description="In SPAI-3.">
    <original>S</original>
    <variation>G</variation>
    <location>
        <position position="156"/>
    </location>
</feature>
<protein>
    <recommendedName>
        <fullName>Sodium/potassium ATPase inhibitor SPAI-2</fullName>
    </recommendedName>
    <alternativeName>
        <fullName>Protein WAP-2</fullName>
    </alternativeName>
</protein>
<accession>P16225</accession>
<dbReference type="EMBL" id="D17755">
    <property type="protein sequence ID" value="BAC21091.1"/>
    <property type="molecule type" value="Genomic_DNA"/>
</dbReference>
<dbReference type="EMBL" id="D83667">
    <property type="protein sequence ID" value="BAA12037.1"/>
    <property type="molecule type" value="mRNA"/>
</dbReference>
<dbReference type="EMBL" id="D50320">
    <property type="protein sequence ID" value="BAA08855.1"/>
    <property type="molecule type" value="Genomic_DNA"/>
</dbReference>
<dbReference type="PIR" id="I46650">
    <property type="entry name" value="I46650"/>
</dbReference>
<dbReference type="RefSeq" id="NP_001004032.1">
    <property type="nucleotide sequence ID" value="NM_001004032.2"/>
</dbReference>
<dbReference type="SMR" id="P16225"/>
<dbReference type="STRING" id="9823.ENSSSCP00000048384"/>
<dbReference type="MEROPS" id="I17.002"/>
<dbReference type="PeptideAtlas" id="P16225"/>
<dbReference type="Ensembl" id="ENSSSCT00000045949.2">
    <property type="protein sequence ID" value="ENSSSCP00000048384.1"/>
    <property type="gene ID" value="ENSSSCG00000033675.3"/>
</dbReference>
<dbReference type="Ensembl" id="ENSSSCT00070024435.1">
    <property type="protein sequence ID" value="ENSSSCP00070020221.1"/>
    <property type="gene ID" value="ENSSSCG00070012487.1"/>
</dbReference>
<dbReference type="Ensembl" id="ENSSSCT00070024444.1">
    <property type="protein sequence ID" value="ENSSSCP00070020229.1"/>
    <property type="gene ID" value="ENSSSCG00070012487.1"/>
</dbReference>
<dbReference type="Ensembl" id="ENSSSCT00090007618">
    <property type="protein sequence ID" value="ENSSSCP00090004567"/>
    <property type="gene ID" value="ENSSSCG00090004357"/>
</dbReference>
<dbReference type="Ensembl" id="ENSSSCT00105030680">
    <property type="protein sequence ID" value="ENSSSCP00105021342"/>
    <property type="gene ID" value="ENSSSCG00105015984"/>
</dbReference>
<dbReference type="GeneID" id="445518"/>
<dbReference type="KEGG" id="ssc:445518"/>
<dbReference type="CTD" id="445518"/>
<dbReference type="GeneTree" id="ENSGT00530000064218"/>
<dbReference type="InParanoid" id="P16225"/>
<dbReference type="OrthoDB" id="5104187at2759"/>
<dbReference type="Proteomes" id="UP000008227">
    <property type="component" value="Chromosome 17"/>
</dbReference>
<dbReference type="Proteomes" id="UP000314985">
    <property type="component" value="Chromosome 17"/>
</dbReference>
<dbReference type="Proteomes" id="UP000694570">
    <property type="component" value="Unplaced"/>
</dbReference>
<dbReference type="Proteomes" id="UP000694571">
    <property type="component" value="Unplaced"/>
</dbReference>
<dbReference type="Proteomes" id="UP000694720">
    <property type="component" value="Unplaced"/>
</dbReference>
<dbReference type="Proteomes" id="UP000694722">
    <property type="component" value="Unplaced"/>
</dbReference>
<dbReference type="Proteomes" id="UP000694723">
    <property type="component" value="Unplaced"/>
</dbReference>
<dbReference type="Proteomes" id="UP000694724">
    <property type="component" value="Unplaced"/>
</dbReference>
<dbReference type="Proteomes" id="UP000694725">
    <property type="component" value="Unplaced"/>
</dbReference>
<dbReference type="Proteomes" id="UP000694726">
    <property type="component" value="Unplaced"/>
</dbReference>
<dbReference type="Proteomes" id="UP000694727">
    <property type="component" value="Unplaced"/>
</dbReference>
<dbReference type="Proteomes" id="UP000694728">
    <property type="component" value="Unplaced"/>
</dbReference>
<dbReference type="Bgee" id="ENSSSCG00000033675">
    <property type="expression patterns" value="Expressed in ileum and 14 other cell types or tissues"/>
</dbReference>
<dbReference type="ExpressionAtlas" id="P16225">
    <property type="expression patterns" value="baseline and differential"/>
</dbReference>
<dbReference type="GO" id="GO:0005615">
    <property type="term" value="C:extracellular space"/>
    <property type="evidence" value="ECO:0000318"/>
    <property type="project" value="GO_Central"/>
</dbReference>
<dbReference type="GO" id="GO:0004867">
    <property type="term" value="F:serine-type endopeptidase inhibitor activity"/>
    <property type="evidence" value="ECO:0000318"/>
    <property type="project" value="GO_Central"/>
</dbReference>
<dbReference type="GO" id="GO:0019731">
    <property type="term" value="P:antibacterial humoral response"/>
    <property type="evidence" value="ECO:0000318"/>
    <property type="project" value="GO_Central"/>
</dbReference>
<dbReference type="GO" id="GO:0007620">
    <property type="term" value="P:copulation"/>
    <property type="evidence" value="ECO:0007669"/>
    <property type="project" value="InterPro"/>
</dbReference>
<dbReference type="GO" id="GO:0045087">
    <property type="term" value="P:innate immune response"/>
    <property type="evidence" value="ECO:0000318"/>
    <property type="project" value="GO_Central"/>
</dbReference>
<dbReference type="CDD" id="cd00199">
    <property type="entry name" value="WAP"/>
    <property type="match status" value="1"/>
</dbReference>
<dbReference type="FunFam" id="4.10.75.10:FF:000001">
    <property type="entry name" value="Anosmin 1"/>
    <property type="match status" value="1"/>
</dbReference>
<dbReference type="Gene3D" id="4.10.75.10">
    <property type="entry name" value="Elafin-like"/>
    <property type="match status" value="1"/>
</dbReference>
<dbReference type="InterPro" id="IPR036645">
    <property type="entry name" value="Elafin-like_sf"/>
</dbReference>
<dbReference type="InterPro" id="IPR002098">
    <property type="entry name" value="SVP_I"/>
</dbReference>
<dbReference type="InterPro" id="IPR019541">
    <property type="entry name" value="Trappin_transglut-bd_rpt"/>
</dbReference>
<dbReference type="InterPro" id="IPR008197">
    <property type="entry name" value="WAP_dom"/>
</dbReference>
<dbReference type="Pfam" id="PF10511">
    <property type="entry name" value="Cementoin"/>
    <property type="match status" value="3"/>
</dbReference>
<dbReference type="Pfam" id="PF00095">
    <property type="entry name" value="WAP"/>
    <property type="match status" value="1"/>
</dbReference>
<dbReference type="PRINTS" id="PR00003">
    <property type="entry name" value="4DISULPHCORE"/>
</dbReference>
<dbReference type="SMART" id="SM00217">
    <property type="entry name" value="WAP"/>
    <property type="match status" value="1"/>
</dbReference>
<dbReference type="SUPFAM" id="SSF57256">
    <property type="entry name" value="Elafin-like"/>
    <property type="match status" value="1"/>
</dbReference>
<dbReference type="PROSITE" id="PS00313">
    <property type="entry name" value="SVP_I"/>
    <property type="match status" value="2"/>
</dbReference>
<dbReference type="PROSITE" id="PS51390">
    <property type="entry name" value="WAP"/>
    <property type="match status" value="1"/>
</dbReference>
<organism>
    <name type="scientific">Sus scrofa</name>
    <name type="common">Pig</name>
    <dbReference type="NCBI Taxonomy" id="9823"/>
    <lineage>
        <taxon>Eukaryota</taxon>
        <taxon>Metazoa</taxon>
        <taxon>Chordata</taxon>
        <taxon>Craniata</taxon>
        <taxon>Vertebrata</taxon>
        <taxon>Euteleostomi</taxon>
        <taxon>Mammalia</taxon>
        <taxon>Eutheria</taxon>
        <taxon>Laurasiatheria</taxon>
        <taxon>Artiodactyla</taxon>
        <taxon>Suina</taxon>
        <taxon>Suidae</taxon>
        <taxon>Sus</taxon>
    </lineage>
</organism>
<proteinExistence type="evidence at protein level"/>
<name>SPAI_PIG</name>
<keyword id="KW-0903">Direct protein sequencing</keyword>
<keyword id="KW-1015">Disulfide bond</keyword>
<keyword id="KW-0873">Pyrrolidone carboxylic acid</keyword>
<keyword id="KW-1185">Reference proteome</keyword>
<keyword id="KW-0677">Repeat</keyword>
<keyword id="KW-0732">Signal</keyword>